<feature type="chain" id="PRO_1000121507" description="Large ribosomal subunit protein bL12">
    <location>
        <begin position="1"/>
        <end position="122"/>
    </location>
</feature>
<organism>
    <name type="scientific">Xanthomonas oryzae pv. oryzae (strain PXO99A)</name>
    <dbReference type="NCBI Taxonomy" id="360094"/>
    <lineage>
        <taxon>Bacteria</taxon>
        <taxon>Pseudomonadati</taxon>
        <taxon>Pseudomonadota</taxon>
        <taxon>Gammaproteobacteria</taxon>
        <taxon>Lysobacterales</taxon>
        <taxon>Lysobacteraceae</taxon>
        <taxon>Xanthomonas</taxon>
    </lineage>
</organism>
<name>RL7_XANOP</name>
<keyword id="KW-0687">Ribonucleoprotein</keyword>
<keyword id="KW-0689">Ribosomal protein</keyword>
<reference key="1">
    <citation type="journal article" date="2008" name="BMC Genomics">
        <title>Genome sequence and rapid evolution of the rice pathogen Xanthomonas oryzae pv. oryzae PXO99A.</title>
        <authorList>
            <person name="Salzberg S.L."/>
            <person name="Sommer D.D."/>
            <person name="Schatz M.C."/>
            <person name="Phillippy A.M."/>
            <person name="Rabinowicz P.D."/>
            <person name="Tsuge S."/>
            <person name="Furutani A."/>
            <person name="Ochiai H."/>
            <person name="Delcher A.L."/>
            <person name="Kelley D."/>
            <person name="Madupu R."/>
            <person name="Puiu D."/>
            <person name="Radune D."/>
            <person name="Shumway M."/>
            <person name="Trapnell C."/>
            <person name="Aparna G."/>
            <person name="Jha G."/>
            <person name="Pandey A."/>
            <person name="Patil P.B."/>
            <person name="Ishihara H."/>
            <person name="Meyer D.F."/>
            <person name="Szurek B."/>
            <person name="Verdier V."/>
            <person name="Koebnik R."/>
            <person name="Dow J.M."/>
            <person name="Ryan R.P."/>
            <person name="Hirata H."/>
            <person name="Tsuyumu S."/>
            <person name="Won Lee S."/>
            <person name="Seo Y.-S."/>
            <person name="Sriariyanum M."/>
            <person name="Ronald P.C."/>
            <person name="Sonti R.V."/>
            <person name="Van Sluys M.-A."/>
            <person name="Leach J.E."/>
            <person name="White F.F."/>
            <person name="Bogdanove A.J."/>
        </authorList>
    </citation>
    <scope>NUCLEOTIDE SEQUENCE [LARGE SCALE GENOMIC DNA]</scope>
    <source>
        <strain>PXO99A</strain>
    </source>
</reference>
<gene>
    <name evidence="1" type="primary">rplL</name>
    <name type="ordered locus">PXO_04531</name>
</gene>
<proteinExistence type="inferred from homology"/>
<accession>B2SQQ0</accession>
<protein>
    <recommendedName>
        <fullName evidence="1">Large ribosomal subunit protein bL12</fullName>
    </recommendedName>
    <alternativeName>
        <fullName evidence="2">50S ribosomal protein L7/L12</fullName>
    </alternativeName>
</protein>
<evidence type="ECO:0000255" key="1">
    <source>
        <dbReference type="HAMAP-Rule" id="MF_00368"/>
    </source>
</evidence>
<evidence type="ECO:0000305" key="2"/>
<comment type="function">
    <text evidence="1">Forms part of the ribosomal stalk which helps the ribosome interact with GTP-bound translation factors. Is thus essential for accurate translation.</text>
</comment>
<comment type="subunit">
    <text evidence="1">Homodimer. Part of the ribosomal stalk of the 50S ribosomal subunit. Forms a multimeric L10(L12)X complex, where L10 forms an elongated spine to which 2 to 4 L12 dimers bind in a sequential fashion. Binds GTP-bound translation factors.</text>
</comment>
<comment type="similarity">
    <text evidence="1">Belongs to the bacterial ribosomal protein bL12 family.</text>
</comment>
<dbReference type="EMBL" id="CP000967">
    <property type="protein sequence ID" value="ACD57877.1"/>
    <property type="molecule type" value="Genomic_DNA"/>
</dbReference>
<dbReference type="RefSeq" id="WP_011260035.1">
    <property type="nucleotide sequence ID" value="NC_010717.2"/>
</dbReference>
<dbReference type="SMR" id="B2SQQ0"/>
<dbReference type="KEGG" id="xop:PXO_04531"/>
<dbReference type="eggNOG" id="COG0222">
    <property type="taxonomic scope" value="Bacteria"/>
</dbReference>
<dbReference type="HOGENOM" id="CLU_086499_3_2_6"/>
<dbReference type="Proteomes" id="UP000001740">
    <property type="component" value="Chromosome"/>
</dbReference>
<dbReference type="GO" id="GO:0022625">
    <property type="term" value="C:cytosolic large ribosomal subunit"/>
    <property type="evidence" value="ECO:0007669"/>
    <property type="project" value="TreeGrafter"/>
</dbReference>
<dbReference type="GO" id="GO:0003729">
    <property type="term" value="F:mRNA binding"/>
    <property type="evidence" value="ECO:0007669"/>
    <property type="project" value="TreeGrafter"/>
</dbReference>
<dbReference type="GO" id="GO:0003735">
    <property type="term" value="F:structural constituent of ribosome"/>
    <property type="evidence" value="ECO:0007669"/>
    <property type="project" value="InterPro"/>
</dbReference>
<dbReference type="GO" id="GO:0006412">
    <property type="term" value="P:translation"/>
    <property type="evidence" value="ECO:0007669"/>
    <property type="project" value="UniProtKB-UniRule"/>
</dbReference>
<dbReference type="CDD" id="cd00387">
    <property type="entry name" value="Ribosomal_L7_L12"/>
    <property type="match status" value="1"/>
</dbReference>
<dbReference type="FunFam" id="1.20.5.710:FF:000003">
    <property type="entry name" value="50S ribosomal protein L7/L12"/>
    <property type="match status" value="1"/>
</dbReference>
<dbReference type="FunFam" id="3.30.1390.10:FF:000001">
    <property type="entry name" value="50S ribosomal protein L7/L12"/>
    <property type="match status" value="1"/>
</dbReference>
<dbReference type="Gene3D" id="3.30.1390.10">
    <property type="match status" value="1"/>
</dbReference>
<dbReference type="Gene3D" id="1.20.5.710">
    <property type="entry name" value="Single helix bin"/>
    <property type="match status" value="1"/>
</dbReference>
<dbReference type="HAMAP" id="MF_00368">
    <property type="entry name" value="Ribosomal_bL12"/>
    <property type="match status" value="1"/>
</dbReference>
<dbReference type="InterPro" id="IPR000206">
    <property type="entry name" value="Ribosomal_bL12"/>
</dbReference>
<dbReference type="InterPro" id="IPR013823">
    <property type="entry name" value="Ribosomal_bL12_C"/>
</dbReference>
<dbReference type="InterPro" id="IPR014719">
    <property type="entry name" value="Ribosomal_bL12_C/ClpS-like"/>
</dbReference>
<dbReference type="InterPro" id="IPR008932">
    <property type="entry name" value="Ribosomal_bL12_oligo"/>
</dbReference>
<dbReference type="InterPro" id="IPR036235">
    <property type="entry name" value="Ribosomal_bL12_oligo_N_sf"/>
</dbReference>
<dbReference type="NCBIfam" id="TIGR00855">
    <property type="entry name" value="L12"/>
    <property type="match status" value="1"/>
</dbReference>
<dbReference type="PANTHER" id="PTHR45987">
    <property type="entry name" value="39S RIBOSOMAL PROTEIN L12"/>
    <property type="match status" value="1"/>
</dbReference>
<dbReference type="PANTHER" id="PTHR45987:SF4">
    <property type="entry name" value="LARGE RIBOSOMAL SUBUNIT PROTEIN BL12M"/>
    <property type="match status" value="1"/>
</dbReference>
<dbReference type="Pfam" id="PF00542">
    <property type="entry name" value="Ribosomal_L12"/>
    <property type="match status" value="1"/>
</dbReference>
<dbReference type="Pfam" id="PF16320">
    <property type="entry name" value="Ribosomal_L12_N"/>
    <property type="match status" value="1"/>
</dbReference>
<dbReference type="SUPFAM" id="SSF54736">
    <property type="entry name" value="ClpS-like"/>
    <property type="match status" value="1"/>
</dbReference>
<dbReference type="SUPFAM" id="SSF48300">
    <property type="entry name" value="Ribosomal protein L7/12, oligomerisation (N-terminal) domain"/>
    <property type="match status" value="1"/>
</dbReference>
<sequence>MSLTNEQIVDAIAEKSLMEVMELVKAIEDKFGVSAAAPVAAAAAAGPAAVVEEQTEFTVVLTNPGLNKVTAIKAVRGVTGLGLKEAKDLTEAGGILKEGVSKDEAEKIKKEMTEAGATVEVK</sequence>